<protein>
    <recommendedName>
        <fullName>Cytochrome b</fullName>
    </recommendedName>
    <alternativeName>
        <fullName>Complex III subunit 3</fullName>
    </alternativeName>
    <alternativeName>
        <fullName>Complex III subunit III</fullName>
    </alternativeName>
    <alternativeName>
        <fullName>Cytochrome b-c1 complex subunit 3</fullName>
    </alternativeName>
    <alternativeName>
        <fullName>Ubiquinol-cytochrome-c reductase complex cytochrome b subunit</fullName>
    </alternativeName>
</protein>
<gene>
    <name type="primary">MT-CYB</name>
    <name type="synonym">COB</name>
    <name type="synonym">CYTB</name>
    <name type="synonym">MTCYB</name>
</gene>
<keyword id="KW-0249">Electron transport</keyword>
<keyword id="KW-0349">Heme</keyword>
<keyword id="KW-0408">Iron</keyword>
<keyword id="KW-0472">Membrane</keyword>
<keyword id="KW-0479">Metal-binding</keyword>
<keyword id="KW-0496">Mitochondrion</keyword>
<keyword id="KW-0999">Mitochondrion inner membrane</keyword>
<keyword id="KW-0679">Respiratory chain</keyword>
<keyword id="KW-0812">Transmembrane</keyword>
<keyword id="KW-1133">Transmembrane helix</keyword>
<keyword id="KW-0813">Transport</keyword>
<keyword id="KW-0830">Ubiquinone</keyword>
<comment type="function">
    <text evidence="2">Component of the ubiquinol-cytochrome c reductase complex (complex III or cytochrome b-c1 complex) that is part of the mitochondrial respiratory chain. The b-c1 complex mediates electron transfer from ubiquinol to cytochrome c. Contributes to the generation of a proton gradient across the mitochondrial membrane that is then used for ATP synthesis.</text>
</comment>
<comment type="cofactor">
    <cofactor evidence="2">
        <name>heme b</name>
        <dbReference type="ChEBI" id="CHEBI:60344"/>
    </cofactor>
    <text evidence="2">Binds 2 heme b groups non-covalently.</text>
</comment>
<comment type="subunit">
    <text evidence="2">The cytochrome bc1 complex contains 11 subunits: 3 respiratory subunits (MT-CYB, CYC1 and UQCRFS1), 2 core proteins (UQCRC1 and UQCRC2) and 6 low-molecular weight proteins (UQCRH/QCR6, UQCRB/QCR7, UQCRQ/QCR8, UQCR10/QCR9, UQCR11/QCR10 and a cleavage product of UQCRFS1). This cytochrome bc1 complex then forms a dimer.</text>
</comment>
<comment type="subcellular location">
    <subcellularLocation>
        <location evidence="2">Mitochondrion inner membrane</location>
        <topology evidence="2">Multi-pass membrane protein</topology>
    </subcellularLocation>
</comment>
<comment type="miscellaneous">
    <text evidence="1">Heme 1 (or BL or b562) is low-potential and absorbs at about 562 nm, and heme 2 (or BH or b566) is high-potential and absorbs at about 566 nm.</text>
</comment>
<comment type="similarity">
    <text evidence="3 4">Belongs to the cytochrome b family.</text>
</comment>
<comment type="caution">
    <text evidence="2">The full-length protein contains only eight transmembrane helices, not nine as predicted by bioinformatics tools.</text>
</comment>
<accession>Q2Y060</accession>
<organism>
    <name type="scientific">Aotus trivirgatus</name>
    <name type="common">Three-striped night monkey</name>
    <name type="synonym">Douroucouli</name>
    <dbReference type="NCBI Taxonomy" id="9505"/>
    <lineage>
        <taxon>Eukaryota</taxon>
        <taxon>Metazoa</taxon>
        <taxon>Chordata</taxon>
        <taxon>Craniata</taxon>
        <taxon>Vertebrata</taxon>
        <taxon>Euteleostomi</taxon>
        <taxon>Mammalia</taxon>
        <taxon>Eutheria</taxon>
        <taxon>Euarchontoglires</taxon>
        <taxon>Primates</taxon>
        <taxon>Haplorrhini</taxon>
        <taxon>Platyrrhini</taxon>
        <taxon>Aotidae</taxon>
        <taxon>Aotus</taxon>
    </lineage>
</organism>
<evidence type="ECO:0000250" key="1"/>
<evidence type="ECO:0000250" key="2">
    <source>
        <dbReference type="UniProtKB" id="P00157"/>
    </source>
</evidence>
<evidence type="ECO:0000255" key="3">
    <source>
        <dbReference type="PROSITE-ProRule" id="PRU00967"/>
    </source>
</evidence>
<evidence type="ECO:0000255" key="4">
    <source>
        <dbReference type="PROSITE-ProRule" id="PRU00968"/>
    </source>
</evidence>
<geneLocation type="mitochondrion"/>
<proteinExistence type="inferred from homology"/>
<name>CYB_AOTTR</name>
<sequence length="379" mass="42658">MTSPRKTHPLAKIINESFIDLPTPSNISSWWNFGSLLGTCLIIQITTGLFLAMHYTPDTSTAFSSVAHITRDVNYGWMIRYMHANGASMFFVCLFLHIGRGLYYGSFLFLKTWNIGTILLLTTMATAFMGYVLPWGQMSFWGATVITNLLSAIPYIGSDLVQWIWGGFSVDKATLTRFFTFHFISPFIIAALATIHLLFLHETGSSNPSGMTSDPDKITFHPYYTAKDILGLIFLLLALMSLTLFMPDLLTDPDNYTLANPLNTPPHIKPEWYFLFAYAILRSIPNKLGGVLALVLSILILMVIPMLHLSKQQSMMFRPITQTLFWTLAADLLTLTWIGGQPVEYPFVTIGQTASIMYFFIIVTLMPLSASIENKLLKW</sequence>
<feature type="chain" id="PRO_0000254780" description="Cytochrome b">
    <location>
        <begin position="1"/>
        <end position="379"/>
    </location>
</feature>
<feature type="transmembrane region" description="Helical" evidence="2">
    <location>
        <begin position="33"/>
        <end position="53"/>
    </location>
</feature>
<feature type="transmembrane region" description="Helical" evidence="2">
    <location>
        <begin position="77"/>
        <end position="98"/>
    </location>
</feature>
<feature type="transmembrane region" description="Helical" evidence="2">
    <location>
        <begin position="113"/>
        <end position="133"/>
    </location>
</feature>
<feature type="transmembrane region" description="Helical" evidence="2">
    <location>
        <begin position="178"/>
        <end position="198"/>
    </location>
</feature>
<feature type="transmembrane region" description="Helical" evidence="2">
    <location>
        <begin position="226"/>
        <end position="246"/>
    </location>
</feature>
<feature type="transmembrane region" description="Helical" evidence="2">
    <location>
        <begin position="288"/>
        <end position="308"/>
    </location>
</feature>
<feature type="transmembrane region" description="Helical" evidence="2">
    <location>
        <begin position="320"/>
        <end position="340"/>
    </location>
</feature>
<feature type="transmembrane region" description="Helical" evidence="2">
    <location>
        <begin position="347"/>
        <end position="367"/>
    </location>
</feature>
<feature type="binding site" description="axial binding residue" evidence="2">
    <location>
        <position position="83"/>
    </location>
    <ligand>
        <name>heme b</name>
        <dbReference type="ChEBI" id="CHEBI:60344"/>
        <label>b562</label>
    </ligand>
    <ligandPart>
        <name>Fe</name>
        <dbReference type="ChEBI" id="CHEBI:18248"/>
    </ligandPart>
</feature>
<feature type="binding site" description="axial binding residue" evidence="2">
    <location>
        <position position="97"/>
    </location>
    <ligand>
        <name>heme b</name>
        <dbReference type="ChEBI" id="CHEBI:60344"/>
        <label>b566</label>
    </ligand>
    <ligandPart>
        <name>Fe</name>
        <dbReference type="ChEBI" id="CHEBI:18248"/>
    </ligandPart>
</feature>
<feature type="binding site" description="axial binding residue" evidence="2">
    <location>
        <position position="182"/>
    </location>
    <ligand>
        <name>heme b</name>
        <dbReference type="ChEBI" id="CHEBI:60344"/>
        <label>b562</label>
    </ligand>
    <ligandPart>
        <name>Fe</name>
        <dbReference type="ChEBI" id="CHEBI:18248"/>
    </ligandPart>
</feature>
<feature type="binding site" description="axial binding residue" evidence="2">
    <location>
        <position position="196"/>
    </location>
    <ligand>
        <name>heme b</name>
        <dbReference type="ChEBI" id="CHEBI:60344"/>
        <label>b566</label>
    </ligand>
    <ligandPart>
        <name>Fe</name>
        <dbReference type="ChEBI" id="CHEBI:18248"/>
    </ligandPart>
</feature>
<feature type="binding site" evidence="2">
    <location>
        <position position="201"/>
    </location>
    <ligand>
        <name>a ubiquinone</name>
        <dbReference type="ChEBI" id="CHEBI:16389"/>
    </ligand>
</feature>
<dbReference type="EMBL" id="DQ098873">
    <property type="protein sequence ID" value="ABA53818.1"/>
    <property type="molecule type" value="Genomic_DNA"/>
</dbReference>
<dbReference type="EMBL" id="DQ098874">
    <property type="protein sequence ID" value="ABA53819.1"/>
    <property type="molecule type" value="Genomic_DNA"/>
</dbReference>
<dbReference type="SMR" id="Q2Y060"/>
<dbReference type="GO" id="GO:0005743">
    <property type="term" value="C:mitochondrial inner membrane"/>
    <property type="evidence" value="ECO:0007669"/>
    <property type="project" value="UniProtKB-SubCell"/>
</dbReference>
<dbReference type="GO" id="GO:0045275">
    <property type="term" value="C:respiratory chain complex III"/>
    <property type="evidence" value="ECO:0007669"/>
    <property type="project" value="InterPro"/>
</dbReference>
<dbReference type="GO" id="GO:0046872">
    <property type="term" value="F:metal ion binding"/>
    <property type="evidence" value="ECO:0007669"/>
    <property type="project" value="UniProtKB-KW"/>
</dbReference>
<dbReference type="GO" id="GO:0008121">
    <property type="term" value="F:ubiquinol-cytochrome-c reductase activity"/>
    <property type="evidence" value="ECO:0007669"/>
    <property type="project" value="InterPro"/>
</dbReference>
<dbReference type="GO" id="GO:0006122">
    <property type="term" value="P:mitochondrial electron transport, ubiquinol to cytochrome c"/>
    <property type="evidence" value="ECO:0007669"/>
    <property type="project" value="TreeGrafter"/>
</dbReference>
<dbReference type="CDD" id="cd00290">
    <property type="entry name" value="cytochrome_b_C"/>
    <property type="match status" value="1"/>
</dbReference>
<dbReference type="CDD" id="cd00284">
    <property type="entry name" value="Cytochrome_b_N"/>
    <property type="match status" value="1"/>
</dbReference>
<dbReference type="FunFam" id="1.20.810.10:FF:000002">
    <property type="entry name" value="Cytochrome b"/>
    <property type="match status" value="1"/>
</dbReference>
<dbReference type="Gene3D" id="1.20.810.10">
    <property type="entry name" value="Cytochrome Bc1 Complex, Chain C"/>
    <property type="match status" value="1"/>
</dbReference>
<dbReference type="InterPro" id="IPR005798">
    <property type="entry name" value="Cyt_b/b6_C"/>
</dbReference>
<dbReference type="InterPro" id="IPR036150">
    <property type="entry name" value="Cyt_b/b6_C_sf"/>
</dbReference>
<dbReference type="InterPro" id="IPR005797">
    <property type="entry name" value="Cyt_b/b6_N"/>
</dbReference>
<dbReference type="InterPro" id="IPR027387">
    <property type="entry name" value="Cytb/b6-like_sf"/>
</dbReference>
<dbReference type="InterPro" id="IPR030689">
    <property type="entry name" value="Cytochrome_b"/>
</dbReference>
<dbReference type="InterPro" id="IPR048260">
    <property type="entry name" value="Cytochrome_b_C_euk/bac"/>
</dbReference>
<dbReference type="InterPro" id="IPR048259">
    <property type="entry name" value="Cytochrome_b_N_euk/bac"/>
</dbReference>
<dbReference type="InterPro" id="IPR016174">
    <property type="entry name" value="Di-haem_cyt_TM"/>
</dbReference>
<dbReference type="PANTHER" id="PTHR19271">
    <property type="entry name" value="CYTOCHROME B"/>
    <property type="match status" value="1"/>
</dbReference>
<dbReference type="PANTHER" id="PTHR19271:SF16">
    <property type="entry name" value="CYTOCHROME B"/>
    <property type="match status" value="1"/>
</dbReference>
<dbReference type="Pfam" id="PF00032">
    <property type="entry name" value="Cytochrom_B_C"/>
    <property type="match status" value="1"/>
</dbReference>
<dbReference type="Pfam" id="PF00033">
    <property type="entry name" value="Cytochrome_B"/>
    <property type="match status" value="1"/>
</dbReference>
<dbReference type="PIRSF" id="PIRSF038885">
    <property type="entry name" value="COB"/>
    <property type="match status" value="1"/>
</dbReference>
<dbReference type="SUPFAM" id="SSF81648">
    <property type="entry name" value="a domain/subunit of cytochrome bc1 complex (Ubiquinol-cytochrome c reductase)"/>
    <property type="match status" value="1"/>
</dbReference>
<dbReference type="SUPFAM" id="SSF81342">
    <property type="entry name" value="Transmembrane di-heme cytochromes"/>
    <property type="match status" value="1"/>
</dbReference>
<dbReference type="PROSITE" id="PS51003">
    <property type="entry name" value="CYTB_CTER"/>
    <property type="match status" value="1"/>
</dbReference>
<dbReference type="PROSITE" id="PS51002">
    <property type="entry name" value="CYTB_NTER"/>
    <property type="match status" value="1"/>
</dbReference>
<reference key="1">
    <citation type="journal article" date="2005" name="J. Virol.">
        <title>Evolution of cyclophilin A and TRIMCyp retrotransposition in New World primates.</title>
        <authorList>
            <person name="Ribeiro I.P."/>
            <person name="Menezes A.N."/>
            <person name="Moreira M.A.M."/>
            <person name="Bonvicino C.R."/>
            <person name="Seuanez H.N."/>
            <person name="Soares M.A."/>
        </authorList>
    </citation>
    <scope>NUCLEOTIDE SEQUENCE [GENOMIC DNA]</scope>
    <source>
        <strain>Isolate 01</strain>
        <strain>Isolate 02</strain>
    </source>
</reference>